<accession>Q8P7J8</accession>
<dbReference type="EC" id="2.1.1.177" evidence="1"/>
<dbReference type="EMBL" id="AE008922">
    <property type="protein sequence ID" value="AAM41885.1"/>
    <property type="molecule type" value="Genomic_DNA"/>
</dbReference>
<dbReference type="RefSeq" id="NP_637961.1">
    <property type="nucleotide sequence ID" value="NC_003902.1"/>
</dbReference>
<dbReference type="RefSeq" id="WP_011037743.1">
    <property type="nucleotide sequence ID" value="NC_003902.1"/>
</dbReference>
<dbReference type="SMR" id="Q8P7J8"/>
<dbReference type="STRING" id="190485.XCC2613"/>
<dbReference type="EnsemblBacteria" id="AAM41885">
    <property type="protein sequence ID" value="AAM41885"/>
    <property type="gene ID" value="XCC2613"/>
</dbReference>
<dbReference type="GeneID" id="58012787"/>
<dbReference type="KEGG" id="xcc:XCC2613"/>
<dbReference type="PATRIC" id="fig|190485.4.peg.2782"/>
<dbReference type="eggNOG" id="COG1576">
    <property type="taxonomic scope" value="Bacteria"/>
</dbReference>
<dbReference type="HOGENOM" id="CLU_100552_1_0_6"/>
<dbReference type="OrthoDB" id="9806643at2"/>
<dbReference type="Proteomes" id="UP000001010">
    <property type="component" value="Chromosome"/>
</dbReference>
<dbReference type="GO" id="GO:0005737">
    <property type="term" value="C:cytoplasm"/>
    <property type="evidence" value="ECO:0007669"/>
    <property type="project" value="UniProtKB-SubCell"/>
</dbReference>
<dbReference type="GO" id="GO:0070038">
    <property type="term" value="F:rRNA (pseudouridine-N3-)-methyltransferase activity"/>
    <property type="evidence" value="ECO:0007669"/>
    <property type="project" value="UniProtKB-UniRule"/>
</dbReference>
<dbReference type="CDD" id="cd18081">
    <property type="entry name" value="RlmH-like"/>
    <property type="match status" value="1"/>
</dbReference>
<dbReference type="Gene3D" id="3.40.1280.10">
    <property type="match status" value="1"/>
</dbReference>
<dbReference type="HAMAP" id="MF_00658">
    <property type="entry name" value="23SrRNA_methyltr_H"/>
    <property type="match status" value="1"/>
</dbReference>
<dbReference type="InterPro" id="IPR029028">
    <property type="entry name" value="Alpha/beta_knot_MTases"/>
</dbReference>
<dbReference type="InterPro" id="IPR003742">
    <property type="entry name" value="RlmH-like"/>
</dbReference>
<dbReference type="InterPro" id="IPR029026">
    <property type="entry name" value="tRNA_m1G_MTases_N"/>
</dbReference>
<dbReference type="NCBIfam" id="NF000986">
    <property type="entry name" value="PRK00103.1-4"/>
    <property type="match status" value="1"/>
</dbReference>
<dbReference type="NCBIfam" id="TIGR00246">
    <property type="entry name" value="tRNA_RlmH_YbeA"/>
    <property type="match status" value="1"/>
</dbReference>
<dbReference type="PANTHER" id="PTHR33603">
    <property type="entry name" value="METHYLTRANSFERASE"/>
    <property type="match status" value="1"/>
</dbReference>
<dbReference type="PANTHER" id="PTHR33603:SF1">
    <property type="entry name" value="RIBOSOMAL RNA LARGE SUBUNIT METHYLTRANSFERASE H"/>
    <property type="match status" value="1"/>
</dbReference>
<dbReference type="Pfam" id="PF02590">
    <property type="entry name" value="SPOUT_MTase"/>
    <property type="match status" value="1"/>
</dbReference>
<dbReference type="PIRSF" id="PIRSF004505">
    <property type="entry name" value="MT_bac"/>
    <property type="match status" value="1"/>
</dbReference>
<dbReference type="SUPFAM" id="SSF75217">
    <property type="entry name" value="alpha/beta knot"/>
    <property type="match status" value="1"/>
</dbReference>
<comment type="function">
    <text evidence="1">Specifically methylates the pseudouridine at position 1915 (m3Psi1915) in 23S rRNA.</text>
</comment>
<comment type="catalytic activity">
    <reaction evidence="1">
        <text>pseudouridine(1915) in 23S rRNA + S-adenosyl-L-methionine = N(3)-methylpseudouridine(1915) in 23S rRNA + S-adenosyl-L-homocysteine + H(+)</text>
        <dbReference type="Rhea" id="RHEA:42752"/>
        <dbReference type="Rhea" id="RHEA-COMP:10221"/>
        <dbReference type="Rhea" id="RHEA-COMP:10222"/>
        <dbReference type="ChEBI" id="CHEBI:15378"/>
        <dbReference type="ChEBI" id="CHEBI:57856"/>
        <dbReference type="ChEBI" id="CHEBI:59789"/>
        <dbReference type="ChEBI" id="CHEBI:65314"/>
        <dbReference type="ChEBI" id="CHEBI:74486"/>
        <dbReference type="EC" id="2.1.1.177"/>
    </reaction>
</comment>
<comment type="subunit">
    <text evidence="1">Homodimer.</text>
</comment>
<comment type="subcellular location">
    <subcellularLocation>
        <location evidence="1">Cytoplasm</location>
    </subcellularLocation>
</comment>
<comment type="similarity">
    <text evidence="1">Belongs to the RNA methyltransferase RlmH family.</text>
</comment>
<keyword id="KW-0963">Cytoplasm</keyword>
<keyword id="KW-0489">Methyltransferase</keyword>
<keyword id="KW-1185">Reference proteome</keyword>
<keyword id="KW-0698">rRNA processing</keyword>
<keyword id="KW-0949">S-adenosyl-L-methionine</keyword>
<keyword id="KW-0808">Transferase</keyword>
<organism>
    <name type="scientific">Xanthomonas campestris pv. campestris (strain ATCC 33913 / DSM 3586 / NCPPB 528 / LMG 568 / P 25)</name>
    <dbReference type="NCBI Taxonomy" id="190485"/>
    <lineage>
        <taxon>Bacteria</taxon>
        <taxon>Pseudomonadati</taxon>
        <taxon>Pseudomonadota</taxon>
        <taxon>Gammaproteobacteria</taxon>
        <taxon>Lysobacterales</taxon>
        <taxon>Lysobacteraceae</taxon>
        <taxon>Xanthomonas</taxon>
    </lineage>
</organism>
<gene>
    <name evidence="1" type="primary">rlmH</name>
    <name type="ordered locus">XCC2613</name>
</gene>
<evidence type="ECO:0000255" key="1">
    <source>
        <dbReference type="HAMAP-Rule" id="MF_00658"/>
    </source>
</evidence>
<protein>
    <recommendedName>
        <fullName evidence="1">Ribosomal RNA large subunit methyltransferase H</fullName>
        <ecNumber evidence="1">2.1.1.177</ecNumber>
    </recommendedName>
    <alternativeName>
        <fullName evidence="1">23S rRNA (pseudouridine1915-N3)-methyltransferase</fullName>
    </alternativeName>
    <alternativeName>
        <fullName evidence="1">23S rRNA m3Psi1915 methyltransferase</fullName>
    </alternativeName>
    <alternativeName>
        <fullName evidence="1">rRNA (pseudouridine-N3-)-methyltransferase RlmH</fullName>
    </alternativeName>
</protein>
<name>RLMH_XANCP</name>
<sequence>MKCRLIATGERAPAWVAQGFAEYQKRLSHWMPLELVEIEPGLRGKGRDAQRAIDDEGRRVLAALPKNAHVVALDVPGRPLSSEQLAQRMEHWRGQGRDLAFLIGGPEGHAADVVKSANESWSIGPLTLPHMLVRLIVAEQLYRAAAMLANHPYHRA</sequence>
<feature type="chain" id="PRO_0000198213" description="Ribosomal RNA large subunit methyltransferase H">
    <location>
        <begin position="1"/>
        <end position="156"/>
    </location>
</feature>
<feature type="binding site" evidence="1">
    <location>
        <position position="73"/>
    </location>
    <ligand>
        <name>S-adenosyl-L-methionine</name>
        <dbReference type="ChEBI" id="CHEBI:59789"/>
    </ligand>
</feature>
<feature type="binding site" evidence="1">
    <location>
        <position position="104"/>
    </location>
    <ligand>
        <name>S-adenosyl-L-methionine</name>
        <dbReference type="ChEBI" id="CHEBI:59789"/>
    </ligand>
</feature>
<feature type="binding site" evidence="1">
    <location>
        <begin position="123"/>
        <end position="128"/>
    </location>
    <ligand>
        <name>S-adenosyl-L-methionine</name>
        <dbReference type="ChEBI" id="CHEBI:59789"/>
    </ligand>
</feature>
<proteinExistence type="inferred from homology"/>
<reference key="1">
    <citation type="journal article" date="2002" name="Nature">
        <title>Comparison of the genomes of two Xanthomonas pathogens with differing host specificities.</title>
        <authorList>
            <person name="da Silva A.C.R."/>
            <person name="Ferro J.A."/>
            <person name="Reinach F.C."/>
            <person name="Farah C.S."/>
            <person name="Furlan L.R."/>
            <person name="Quaggio R.B."/>
            <person name="Monteiro-Vitorello C.B."/>
            <person name="Van Sluys M.A."/>
            <person name="Almeida N.F. Jr."/>
            <person name="Alves L.M.C."/>
            <person name="do Amaral A.M."/>
            <person name="Bertolini M.C."/>
            <person name="Camargo L.E.A."/>
            <person name="Camarotte G."/>
            <person name="Cannavan F."/>
            <person name="Cardozo J."/>
            <person name="Chambergo F."/>
            <person name="Ciapina L.P."/>
            <person name="Cicarelli R.M.B."/>
            <person name="Coutinho L.L."/>
            <person name="Cursino-Santos J.R."/>
            <person name="El-Dorry H."/>
            <person name="Faria J.B."/>
            <person name="Ferreira A.J.S."/>
            <person name="Ferreira R.C.C."/>
            <person name="Ferro M.I.T."/>
            <person name="Formighieri E.F."/>
            <person name="Franco M.C."/>
            <person name="Greggio C.C."/>
            <person name="Gruber A."/>
            <person name="Katsuyama A.M."/>
            <person name="Kishi L.T."/>
            <person name="Leite R.P."/>
            <person name="Lemos E.G.M."/>
            <person name="Lemos M.V.F."/>
            <person name="Locali E.C."/>
            <person name="Machado M.A."/>
            <person name="Madeira A.M.B.N."/>
            <person name="Martinez-Rossi N.M."/>
            <person name="Martins E.C."/>
            <person name="Meidanis J."/>
            <person name="Menck C.F.M."/>
            <person name="Miyaki C.Y."/>
            <person name="Moon D.H."/>
            <person name="Moreira L.M."/>
            <person name="Novo M.T.M."/>
            <person name="Okura V.K."/>
            <person name="Oliveira M.C."/>
            <person name="Oliveira V.R."/>
            <person name="Pereira H.A."/>
            <person name="Rossi A."/>
            <person name="Sena J.A.D."/>
            <person name="Silva C."/>
            <person name="de Souza R.F."/>
            <person name="Spinola L.A.F."/>
            <person name="Takita M.A."/>
            <person name="Tamura R.E."/>
            <person name="Teixeira E.C."/>
            <person name="Tezza R.I.D."/>
            <person name="Trindade dos Santos M."/>
            <person name="Truffi D."/>
            <person name="Tsai S.M."/>
            <person name="White F.F."/>
            <person name="Setubal J.C."/>
            <person name="Kitajima J.P."/>
        </authorList>
    </citation>
    <scope>NUCLEOTIDE SEQUENCE [LARGE SCALE GENOMIC DNA]</scope>
    <source>
        <strain>ATCC 33913 / DSM 3586 / NCPPB 528 / LMG 568 / P 25</strain>
    </source>
</reference>